<evidence type="ECO:0000255" key="1">
    <source>
        <dbReference type="HAMAP-Rule" id="MF_00358"/>
    </source>
</evidence>
<evidence type="ECO:0000256" key="2">
    <source>
        <dbReference type="SAM" id="MobiDB-lite"/>
    </source>
</evidence>
<evidence type="ECO:0000305" key="3"/>
<comment type="similarity">
    <text evidence="1">Belongs to the bacterial ribosomal protein bS21 family.</text>
</comment>
<dbReference type="EMBL" id="AM180355">
    <property type="protein sequence ID" value="CAJ69333.1"/>
    <property type="molecule type" value="Genomic_DNA"/>
</dbReference>
<dbReference type="RefSeq" id="WP_003416618.1">
    <property type="nucleotide sequence ID" value="NZ_JAUPES010000003.1"/>
</dbReference>
<dbReference type="RefSeq" id="YP_001088960.1">
    <property type="nucleotide sequence ID" value="NC_009089.1"/>
</dbReference>
<dbReference type="SMR" id="Q182D5"/>
<dbReference type="STRING" id="272563.CD630_24461"/>
<dbReference type="EnsemblBacteria" id="CAJ69333">
    <property type="protein sequence ID" value="CAJ69333"/>
    <property type="gene ID" value="CD630_24461"/>
</dbReference>
<dbReference type="GeneID" id="66354844"/>
<dbReference type="KEGG" id="cdf:CD630_24461"/>
<dbReference type="KEGG" id="pdc:CDIF630_02691"/>
<dbReference type="PATRIC" id="fig|272563.120.peg.2583"/>
<dbReference type="eggNOG" id="COG0828">
    <property type="taxonomic scope" value="Bacteria"/>
</dbReference>
<dbReference type="OrthoDB" id="9799244at2"/>
<dbReference type="PhylomeDB" id="Q182D5"/>
<dbReference type="BioCyc" id="PDIF272563:G12WB-2600-MONOMER"/>
<dbReference type="Proteomes" id="UP000001978">
    <property type="component" value="Chromosome"/>
</dbReference>
<dbReference type="GO" id="GO:1990904">
    <property type="term" value="C:ribonucleoprotein complex"/>
    <property type="evidence" value="ECO:0007669"/>
    <property type="project" value="UniProtKB-KW"/>
</dbReference>
<dbReference type="GO" id="GO:0005840">
    <property type="term" value="C:ribosome"/>
    <property type="evidence" value="ECO:0007669"/>
    <property type="project" value="UniProtKB-KW"/>
</dbReference>
<dbReference type="GO" id="GO:0003735">
    <property type="term" value="F:structural constituent of ribosome"/>
    <property type="evidence" value="ECO:0007669"/>
    <property type="project" value="InterPro"/>
</dbReference>
<dbReference type="GO" id="GO:0006412">
    <property type="term" value="P:translation"/>
    <property type="evidence" value="ECO:0007669"/>
    <property type="project" value="UniProtKB-UniRule"/>
</dbReference>
<dbReference type="Gene3D" id="1.20.5.1150">
    <property type="entry name" value="Ribosomal protein S8"/>
    <property type="match status" value="1"/>
</dbReference>
<dbReference type="HAMAP" id="MF_00358">
    <property type="entry name" value="Ribosomal_bS21"/>
    <property type="match status" value="1"/>
</dbReference>
<dbReference type="InterPro" id="IPR001911">
    <property type="entry name" value="Ribosomal_bS21"/>
</dbReference>
<dbReference type="InterPro" id="IPR038380">
    <property type="entry name" value="Ribosomal_bS21_sf"/>
</dbReference>
<dbReference type="NCBIfam" id="TIGR00030">
    <property type="entry name" value="S21p"/>
    <property type="match status" value="1"/>
</dbReference>
<dbReference type="PANTHER" id="PTHR21109">
    <property type="entry name" value="MITOCHONDRIAL 28S RIBOSOMAL PROTEIN S21"/>
    <property type="match status" value="1"/>
</dbReference>
<dbReference type="PANTHER" id="PTHR21109:SF22">
    <property type="entry name" value="SMALL RIBOSOMAL SUBUNIT PROTEIN BS21"/>
    <property type="match status" value="1"/>
</dbReference>
<dbReference type="Pfam" id="PF01165">
    <property type="entry name" value="Ribosomal_S21"/>
    <property type="match status" value="1"/>
</dbReference>
<dbReference type="PRINTS" id="PR00976">
    <property type="entry name" value="RIBOSOMALS21"/>
</dbReference>
<proteinExistence type="inferred from homology"/>
<name>RS21_CLOD6</name>
<keyword id="KW-1185">Reference proteome</keyword>
<keyword id="KW-0687">Ribonucleoprotein</keyword>
<keyword id="KW-0689">Ribosomal protein</keyword>
<protein>
    <recommendedName>
        <fullName evidence="1">Small ribosomal subunit protein bS21</fullName>
    </recommendedName>
    <alternativeName>
        <fullName evidence="3">30S ribosomal protein S21</fullName>
    </alternativeName>
</protein>
<sequence length="59" mass="7020">MSEVRVRENETLDSALRRFKRQCAMSGIMSEVRKREHYDKPSVKRKKKAEAARRKNAKK</sequence>
<organism>
    <name type="scientific">Clostridioides difficile (strain 630)</name>
    <name type="common">Peptoclostridium difficile</name>
    <dbReference type="NCBI Taxonomy" id="272563"/>
    <lineage>
        <taxon>Bacteria</taxon>
        <taxon>Bacillati</taxon>
        <taxon>Bacillota</taxon>
        <taxon>Clostridia</taxon>
        <taxon>Peptostreptococcales</taxon>
        <taxon>Peptostreptococcaceae</taxon>
        <taxon>Clostridioides</taxon>
    </lineage>
</organism>
<reference key="1">
    <citation type="journal article" date="2006" name="Nat. Genet.">
        <title>The multidrug-resistant human pathogen Clostridium difficile has a highly mobile, mosaic genome.</title>
        <authorList>
            <person name="Sebaihia M."/>
            <person name="Wren B.W."/>
            <person name="Mullany P."/>
            <person name="Fairweather N.F."/>
            <person name="Minton N."/>
            <person name="Stabler R."/>
            <person name="Thomson N.R."/>
            <person name="Roberts A.P."/>
            <person name="Cerdeno-Tarraga A.M."/>
            <person name="Wang H."/>
            <person name="Holden M.T.G."/>
            <person name="Wright A."/>
            <person name="Churcher C."/>
            <person name="Quail M.A."/>
            <person name="Baker S."/>
            <person name="Bason N."/>
            <person name="Brooks K."/>
            <person name="Chillingworth T."/>
            <person name="Cronin A."/>
            <person name="Davis P."/>
            <person name="Dowd L."/>
            <person name="Fraser A."/>
            <person name="Feltwell T."/>
            <person name="Hance Z."/>
            <person name="Holroyd S."/>
            <person name="Jagels K."/>
            <person name="Moule S."/>
            <person name="Mungall K."/>
            <person name="Price C."/>
            <person name="Rabbinowitsch E."/>
            <person name="Sharp S."/>
            <person name="Simmonds M."/>
            <person name="Stevens K."/>
            <person name="Unwin L."/>
            <person name="Whithead S."/>
            <person name="Dupuy B."/>
            <person name="Dougan G."/>
            <person name="Barrell B."/>
            <person name="Parkhill J."/>
        </authorList>
    </citation>
    <scope>NUCLEOTIDE SEQUENCE [LARGE SCALE GENOMIC DNA]</scope>
    <source>
        <strain>630</strain>
    </source>
</reference>
<accession>Q182D5</accession>
<feature type="chain" id="PRO_0000266656" description="Small ribosomal subunit protein bS21">
    <location>
        <begin position="1"/>
        <end position="59"/>
    </location>
</feature>
<feature type="region of interest" description="Disordered" evidence="2">
    <location>
        <begin position="32"/>
        <end position="59"/>
    </location>
</feature>
<feature type="compositionally biased region" description="Basic and acidic residues" evidence="2">
    <location>
        <begin position="32"/>
        <end position="42"/>
    </location>
</feature>
<feature type="compositionally biased region" description="Basic residues" evidence="2">
    <location>
        <begin position="43"/>
        <end position="59"/>
    </location>
</feature>
<gene>
    <name evidence="1" type="primary">rpsU</name>
    <name type="ordered locus">CD630_24460</name>
</gene>